<proteinExistence type="evidence at transcript level"/>
<organism>
    <name type="scientific">Danio rerio</name>
    <name type="common">Zebrafish</name>
    <name type="synonym">Brachydanio rerio</name>
    <dbReference type="NCBI Taxonomy" id="7955"/>
    <lineage>
        <taxon>Eukaryota</taxon>
        <taxon>Metazoa</taxon>
        <taxon>Chordata</taxon>
        <taxon>Craniata</taxon>
        <taxon>Vertebrata</taxon>
        <taxon>Euteleostomi</taxon>
        <taxon>Actinopterygii</taxon>
        <taxon>Neopterygii</taxon>
        <taxon>Teleostei</taxon>
        <taxon>Ostariophysi</taxon>
        <taxon>Cypriniformes</taxon>
        <taxon>Danionidae</taxon>
        <taxon>Danioninae</taxon>
        <taxon>Danio</taxon>
    </lineage>
</organism>
<reference key="1">
    <citation type="submission" date="2004-09" db="EMBL/GenBank/DDBJ databases">
        <authorList>
            <consortium name="NIH - Zebrafish Gene Collection (ZGC) project"/>
        </authorList>
    </citation>
    <scope>NUCLEOTIDE SEQUENCE [LARGE SCALE MRNA]</scope>
</reference>
<keyword id="KW-0456">Lyase</keyword>
<keyword id="KW-1185">Reference proteome</keyword>
<accession>Q66I06</accession>
<protein>
    <recommendedName>
        <fullName>Gamma-glutamylaminecyclotransferase B</fullName>
        <shortName>GGACT B</shortName>
        <ecNumber evidence="2">4.3.2.8</ecNumber>
    </recommendedName>
    <alternativeName>
        <fullName>AIG2-like domain-containing protein 1-B</fullName>
    </alternativeName>
    <alternativeName>
        <fullName>Gamma-glutamylamine cyclotransferase B</fullName>
    </alternativeName>
    <alternativeName>
        <fullName>Gamma-glutamylamine cyclotransferase, tandem duplicate 2</fullName>
    </alternativeName>
</protein>
<sequence>MPLVFVYGTLKKGQPNYFRLIDSSNGQAEFITCARTVEPYPLVITGECNIPFLLNVPGSGQRVYGEIYSVDQKMLEFLDWFEECPDWYQRTLIQLEILKGNGETEVEEAFVYTKTKYEPDWLNKPTYDSYDSNGDHGLKYAYEEDMTRSTLDQKSADFSQNSEQEIKKNNSLQILTSTGDDHDVNFRGPLQ</sequence>
<dbReference type="EC" id="4.3.2.8" evidence="2"/>
<dbReference type="EMBL" id="BC081599">
    <property type="protein sequence ID" value="AAH81599.1"/>
    <property type="molecule type" value="mRNA"/>
</dbReference>
<dbReference type="RefSeq" id="NP_001004544.1">
    <property type="nucleotide sequence ID" value="NM_001004544.1"/>
</dbReference>
<dbReference type="SMR" id="Q66I06"/>
<dbReference type="FunCoup" id="Q66I06">
    <property type="interactions" value="381"/>
</dbReference>
<dbReference type="STRING" id="7955.ENSDARP00000055778"/>
<dbReference type="PaxDb" id="7955-ENSDARP00000055778"/>
<dbReference type="Ensembl" id="ENSDART00000055779">
    <property type="protein sequence ID" value="ENSDARP00000055778"/>
    <property type="gene ID" value="ENSDARG00000038248"/>
</dbReference>
<dbReference type="GeneID" id="447805"/>
<dbReference type="KEGG" id="dre:447805"/>
<dbReference type="AGR" id="ZFIN:ZDB-GENE-040912-8"/>
<dbReference type="CTD" id="447805"/>
<dbReference type="ZFIN" id="ZDB-GENE-040912-8">
    <property type="gene designation" value="ggact.2"/>
</dbReference>
<dbReference type="eggNOG" id="KOG4450">
    <property type="taxonomic scope" value="Eukaryota"/>
</dbReference>
<dbReference type="HOGENOM" id="CLU_083466_1_0_1"/>
<dbReference type="InParanoid" id="Q66I06"/>
<dbReference type="OMA" id="FENIPTM"/>
<dbReference type="OrthoDB" id="113620at2759"/>
<dbReference type="PhylomeDB" id="Q66I06"/>
<dbReference type="TreeFam" id="TF323258"/>
<dbReference type="PRO" id="PR:Q66I06"/>
<dbReference type="Proteomes" id="UP000000437">
    <property type="component" value="Chromosome 1"/>
</dbReference>
<dbReference type="Bgee" id="ENSDARG00000038248">
    <property type="expression patterns" value="Expressed in granulocyte and 20 other cell types or tissues"/>
</dbReference>
<dbReference type="GO" id="GO:0005829">
    <property type="term" value="C:cytosol"/>
    <property type="evidence" value="ECO:0000318"/>
    <property type="project" value="GO_Central"/>
</dbReference>
<dbReference type="GO" id="GO:0061929">
    <property type="term" value="F:gamma-glutamylaminecyclotransferase activity"/>
    <property type="evidence" value="ECO:0000250"/>
    <property type="project" value="UniProtKB"/>
</dbReference>
<dbReference type="GO" id="GO:0042219">
    <property type="term" value="P:modified amino acid catabolic process"/>
    <property type="evidence" value="ECO:0000250"/>
    <property type="project" value="UniProtKB"/>
</dbReference>
<dbReference type="CDD" id="cd06661">
    <property type="entry name" value="GGCT_like"/>
    <property type="match status" value="1"/>
</dbReference>
<dbReference type="FunFam" id="3.10.490.10:FF:000008">
    <property type="entry name" value="Gamma-glutamylaminecyclotransferase A"/>
    <property type="match status" value="1"/>
</dbReference>
<dbReference type="Gene3D" id="3.10.490.10">
    <property type="entry name" value="Gamma-glutamyl cyclotransferase-like"/>
    <property type="match status" value="1"/>
</dbReference>
<dbReference type="InterPro" id="IPR009288">
    <property type="entry name" value="AIG2-like_dom"/>
</dbReference>
<dbReference type="InterPro" id="IPR039126">
    <property type="entry name" value="GGACT"/>
</dbReference>
<dbReference type="InterPro" id="IPR013024">
    <property type="entry name" value="GGCT-like"/>
</dbReference>
<dbReference type="InterPro" id="IPR036568">
    <property type="entry name" value="GGCT-like_sf"/>
</dbReference>
<dbReference type="PANTHER" id="PTHR12510:SF4">
    <property type="entry name" value="GAMMA-GLUTAMYLAMINECYCLOTRANSFERASE"/>
    <property type="match status" value="1"/>
</dbReference>
<dbReference type="PANTHER" id="PTHR12510">
    <property type="entry name" value="TROPONIN C-AKIN-1 PROTEIN"/>
    <property type="match status" value="1"/>
</dbReference>
<dbReference type="Pfam" id="PF06094">
    <property type="entry name" value="GGACT"/>
    <property type="match status" value="1"/>
</dbReference>
<dbReference type="SUPFAM" id="SSF110857">
    <property type="entry name" value="Gamma-glutamyl cyclotransferase-like"/>
    <property type="match status" value="1"/>
</dbReference>
<gene>
    <name type="primary">ggact.2</name>
    <name type="ORF">zgc:92115</name>
</gene>
<name>GGACB_DANRE</name>
<evidence type="ECO:0000250" key="1"/>
<evidence type="ECO:0000250" key="2">
    <source>
        <dbReference type="UniProtKB" id="Q9BVM4"/>
    </source>
</evidence>
<evidence type="ECO:0000256" key="3">
    <source>
        <dbReference type="SAM" id="MobiDB-lite"/>
    </source>
</evidence>
<evidence type="ECO:0000305" key="4"/>
<feature type="chain" id="PRO_0000320206" description="Gamma-glutamylaminecyclotransferase B">
    <location>
        <begin position="1"/>
        <end position="191"/>
    </location>
</feature>
<feature type="region of interest" description="Disordered" evidence="3">
    <location>
        <begin position="155"/>
        <end position="191"/>
    </location>
</feature>
<feature type="compositionally biased region" description="Polar residues" evidence="3">
    <location>
        <begin position="155"/>
        <end position="178"/>
    </location>
</feature>
<feature type="active site" description="Proton acceptor" evidence="1">
    <location>
        <position position="82"/>
    </location>
</feature>
<feature type="binding site" evidence="1">
    <location>
        <begin position="7"/>
        <end position="10"/>
    </location>
    <ligand>
        <name>substrate</name>
    </ligand>
</feature>
<comment type="function">
    <text evidence="2">May contribute to degradation of proteins cross-linked by transglutaminases by degrading the cross-link between a lysine and a glutamic acid residue. Catalyzes the formation of 5-oxo-L-proline from L-gamma-glutamyl-L-epsilon-lysine.</text>
</comment>
<comment type="catalytic activity">
    <reaction evidence="2">
        <text>epsilon-(gamma-L-glutamyl)-L-lysine = 5-oxo-L-proline + L-lysine</text>
        <dbReference type="Rhea" id="RHEA:16961"/>
        <dbReference type="ChEBI" id="CHEBI:32551"/>
        <dbReference type="ChEBI" id="CHEBI:58402"/>
        <dbReference type="ChEBI" id="CHEBI:133752"/>
        <dbReference type="EC" id="4.3.2.8"/>
    </reaction>
</comment>
<comment type="similarity">
    <text evidence="4">Belongs to the gamma-glutamylcyclotransferase family.</text>
</comment>